<reference key="1">
    <citation type="journal article" date="2000" name="Nature">
        <title>Sequence and analysis of chromosome 1 of the plant Arabidopsis thaliana.</title>
        <authorList>
            <person name="Theologis A."/>
            <person name="Ecker J.R."/>
            <person name="Palm C.J."/>
            <person name="Federspiel N.A."/>
            <person name="Kaul S."/>
            <person name="White O."/>
            <person name="Alonso J."/>
            <person name="Altafi H."/>
            <person name="Araujo R."/>
            <person name="Bowman C.L."/>
            <person name="Brooks S.Y."/>
            <person name="Buehler E."/>
            <person name="Chan A."/>
            <person name="Chao Q."/>
            <person name="Chen H."/>
            <person name="Cheuk R.F."/>
            <person name="Chin C.W."/>
            <person name="Chung M.K."/>
            <person name="Conn L."/>
            <person name="Conway A.B."/>
            <person name="Conway A.R."/>
            <person name="Creasy T.H."/>
            <person name="Dewar K."/>
            <person name="Dunn P."/>
            <person name="Etgu P."/>
            <person name="Feldblyum T.V."/>
            <person name="Feng J.-D."/>
            <person name="Fong B."/>
            <person name="Fujii C.Y."/>
            <person name="Gill J.E."/>
            <person name="Goldsmith A.D."/>
            <person name="Haas B."/>
            <person name="Hansen N.F."/>
            <person name="Hughes B."/>
            <person name="Huizar L."/>
            <person name="Hunter J.L."/>
            <person name="Jenkins J."/>
            <person name="Johnson-Hopson C."/>
            <person name="Khan S."/>
            <person name="Khaykin E."/>
            <person name="Kim C.J."/>
            <person name="Koo H.L."/>
            <person name="Kremenetskaia I."/>
            <person name="Kurtz D.B."/>
            <person name="Kwan A."/>
            <person name="Lam B."/>
            <person name="Langin-Hooper S."/>
            <person name="Lee A."/>
            <person name="Lee J.M."/>
            <person name="Lenz C.A."/>
            <person name="Li J.H."/>
            <person name="Li Y.-P."/>
            <person name="Lin X."/>
            <person name="Liu S.X."/>
            <person name="Liu Z.A."/>
            <person name="Luros J.S."/>
            <person name="Maiti R."/>
            <person name="Marziali A."/>
            <person name="Militscher J."/>
            <person name="Miranda M."/>
            <person name="Nguyen M."/>
            <person name="Nierman W.C."/>
            <person name="Osborne B.I."/>
            <person name="Pai G."/>
            <person name="Peterson J."/>
            <person name="Pham P.K."/>
            <person name="Rizzo M."/>
            <person name="Rooney T."/>
            <person name="Rowley D."/>
            <person name="Sakano H."/>
            <person name="Salzberg S.L."/>
            <person name="Schwartz J.R."/>
            <person name="Shinn P."/>
            <person name="Southwick A.M."/>
            <person name="Sun H."/>
            <person name="Tallon L.J."/>
            <person name="Tambunga G."/>
            <person name="Toriumi M.J."/>
            <person name="Town C.D."/>
            <person name="Utterback T."/>
            <person name="Van Aken S."/>
            <person name="Vaysberg M."/>
            <person name="Vysotskaia V.S."/>
            <person name="Walker M."/>
            <person name="Wu D."/>
            <person name="Yu G."/>
            <person name="Fraser C.M."/>
            <person name="Venter J.C."/>
            <person name="Davis R.W."/>
        </authorList>
    </citation>
    <scope>NUCLEOTIDE SEQUENCE [LARGE SCALE GENOMIC DNA]</scope>
    <source>
        <strain>cv. Columbia</strain>
    </source>
</reference>
<reference key="2">
    <citation type="journal article" date="2017" name="Plant J.">
        <title>Araport11: a complete reannotation of the Arabidopsis thaliana reference genome.</title>
        <authorList>
            <person name="Cheng C.Y."/>
            <person name="Krishnakumar V."/>
            <person name="Chan A.P."/>
            <person name="Thibaud-Nissen F."/>
            <person name="Schobel S."/>
            <person name="Town C.D."/>
        </authorList>
    </citation>
    <scope>GENOME REANNOTATION</scope>
    <source>
        <strain>cv. Columbia</strain>
    </source>
</reference>
<reference key="3">
    <citation type="journal article" date="2004" name="Plant Cell">
        <title>Genome-wide analysis of Arabidopsis pentatricopeptide repeat proteins reveals their essential role in organelle biogenesis.</title>
        <authorList>
            <person name="Lurin C."/>
            <person name="Andres C."/>
            <person name="Aubourg S."/>
            <person name="Bellaoui M."/>
            <person name="Bitton F."/>
            <person name="Bruyere C."/>
            <person name="Caboche M."/>
            <person name="Debast C."/>
            <person name="Gualberto J."/>
            <person name="Hoffmann B."/>
            <person name="Lecharny A."/>
            <person name="Le Ret M."/>
            <person name="Martin-Magniette M.-L."/>
            <person name="Mireau H."/>
            <person name="Peeters N."/>
            <person name="Renou J.-P."/>
            <person name="Szurek B."/>
            <person name="Taconnat L."/>
            <person name="Small I."/>
        </authorList>
    </citation>
    <scope>GENE FAMILY</scope>
</reference>
<accession>Q9C7F1</accession>
<accession>F4HUV3</accession>
<keyword id="KW-1185">Reference proteome</keyword>
<keyword id="KW-0677">Repeat</keyword>
<proteinExistence type="inferred from homology"/>
<gene>
    <name type="ordered locus">At1g28020</name>
    <name type="ORF">F13K9.12</name>
</gene>
<evidence type="ECO:0000305" key="1"/>
<dbReference type="EMBL" id="AC069471">
    <property type="protein sequence ID" value="AAG51479.1"/>
    <property type="status" value="ALT_SEQ"/>
    <property type="molecule type" value="Genomic_DNA"/>
</dbReference>
<dbReference type="EMBL" id="CP002684">
    <property type="status" value="NOT_ANNOTATED_CDS"/>
    <property type="molecule type" value="Genomic_DNA"/>
</dbReference>
<dbReference type="PIR" id="G86405">
    <property type="entry name" value="G86405"/>
</dbReference>
<dbReference type="SMR" id="Q9C7F1"/>
<dbReference type="PaxDb" id="3702-AT1G28020.1"/>
<dbReference type="Araport" id="AT1G28020"/>
<dbReference type="TAIR" id="AT1G28020"/>
<dbReference type="eggNOG" id="KOG4197">
    <property type="taxonomic scope" value="Eukaryota"/>
</dbReference>
<dbReference type="HOGENOM" id="CLU_031004_0_0_1"/>
<dbReference type="InParanoid" id="Q9C7F1"/>
<dbReference type="PhylomeDB" id="Q9C7F1"/>
<dbReference type="PRO" id="PR:Q9C7F1"/>
<dbReference type="Proteomes" id="UP000006548">
    <property type="component" value="Chromosome 1"/>
</dbReference>
<dbReference type="ExpressionAtlas" id="Q9C7F1">
    <property type="expression patterns" value="baseline"/>
</dbReference>
<dbReference type="GO" id="GO:0005739">
    <property type="term" value="C:mitochondrion"/>
    <property type="evidence" value="ECO:0000318"/>
    <property type="project" value="GO_Central"/>
</dbReference>
<dbReference type="GO" id="GO:0003729">
    <property type="term" value="F:mRNA binding"/>
    <property type="evidence" value="ECO:0007669"/>
    <property type="project" value="UniProtKB-ARBA"/>
</dbReference>
<dbReference type="FunFam" id="1.25.40.10:FF:001541">
    <property type="entry name" value="Pentatricopeptide repeat (PPR) superfamily protein"/>
    <property type="match status" value="1"/>
</dbReference>
<dbReference type="Gene3D" id="1.25.40.10">
    <property type="entry name" value="Tetratricopeptide repeat domain"/>
    <property type="match status" value="3"/>
</dbReference>
<dbReference type="InterPro" id="IPR002885">
    <property type="entry name" value="Pentatricopeptide_rpt"/>
</dbReference>
<dbReference type="InterPro" id="IPR011990">
    <property type="entry name" value="TPR-like_helical_dom_sf"/>
</dbReference>
<dbReference type="NCBIfam" id="TIGR00756">
    <property type="entry name" value="PPR"/>
    <property type="match status" value="1"/>
</dbReference>
<dbReference type="PANTHER" id="PTHR45717">
    <property type="entry name" value="OS12G0527900 PROTEIN"/>
    <property type="match status" value="1"/>
</dbReference>
<dbReference type="PANTHER" id="PTHR45717:SF18">
    <property type="entry name" value="PENTACOTRIPEPTIDE-REPEAT REGION OF PRORP DOMAIN-CONTAINING PROTEIN"/>
    <property type="match status" value="1"/>
</dbReference>
<dbReference type="Pfam" id="PF01535">
    <property type="entry name" value="PPR"/>
    <property type="match status" value="1"/>
</dbReference>
<dbReference type="Pfam" id="PF13812">
    <property type="entry name" value="PPR_3"/>
    <property type="match status" value="1"/>
</dbReference>
<dbReference type="PROSITE" id="PS51375">
    <property type="entry name" value="PPR"/>
    <property type="match status" value="8"/>
</dbReference>
<organism>
    <name type="scientific">Arabidopsis thaliana</name>
    <name type="common">Mouse-ear cress</name>
    <dbReference type="NCBI Taxonomy" id="3702"/>
    <lineage>
        <taxon>Eukaryota</taxon>
        <taxon>Viridiplantae</taxon>
        <taxon>Streptophyta</taxon>
        <taxon>Embryophyta</taxon>
        <taxon>Tracheophyta</taxon>
        <taxon>Spermatophyta</taxon>
        <taxon>Magnoliopsida</taxon>
        <taxon>eudicotyledons</taxon>
        <taxon>Gunneridae</taxon>
        <taxon>Pentapetalae</taxon>
        <taxon>rosids</taxon>
        <taxon>malvids</taxon>
        <taxon>Brassicales</taxon>
        <taxon>Brassicaceae</taxon>
        <taxon>Camelineae</taxon>
        <taxon>Arabidopsis</taxon>
    </lineage>
</organism>
<name>PPR61_ARATH</name>
<sequence>MVSSFPFVYQNMLAKRPYGAYQNVITVSMSWLKIHGSCPHRITDALHRNAQIIPVLEQWRQQGNQVNPSHVRVIIKKLRDSDQSLQALQVSEWMSKEKICNLIPEDFAARLHLIENVVGLEEAEKFFESIPKNARGDSVYTSLLNSYARSDKTLCKAEATFQKMRDLGLLLRPVPYNAMMSLYSALKNREKVEELLLEMKDNDVEADNVTVNNVLKLYSAVCDVTEMEKFLNKWEGIHGIKLEWHTTLDMAKAYLRARSSGKAMKMLRLTEQLVDQKSLKSAYDHLMKLYGEAGNREEVLRVWKLYKSKIGERDNNGYRTVIRSLLKVDDIVGAEEIYKVWESLPLEFDHRIPTMLASGYRDRGMTEKAEKLMNSKTIKDRRMNKPVTPLLEQWGDQMKPSDLKCLIKNLRDSKQFSKALQVSEWMGEKQVCNLYLEDYAARLYLTENVLGLEEAEKYFENIPENMKDYSVYVALLSSYAKSDKNLGNMVDEILREMEENNVDPDLITVNHVLKVYAAESKIQAMEMFMRRWGTEDGIKLERGTMIAMAKAYVKAGLTKKSGRGVW</sequence>
<feature type="chain" id="PRO_0000342802" description="Putative pentatricopeptide repeat-containing protein At1g28020">
    <location>
        <begin position="1"/>
        <end position="566"/>
    </location>
</feature>
<feature type="repeat" description="PPR 1">
    <location>
        <begin position="136"/>
        <end position="171"/>
    </location>
</feature>
<feature type="repeat" description="PPR 2">
    <location>
        <begin position="172"/>
        <end position="206"/>
    </location>
</feature>
<feature type="repeat" description="PPR 3">
    <location>
        <begin position="207"/>
        <end position="242"/>
    </location>
</feature>
<feature type="repeat" description="PPR 4">
    <location>
        <begin position="243"/>
        <end position="273"/>
    </location>
</feature>
<feature type="repeat" description="PPR 5">
    <location>
        <begin position="279"/>
        <end position="309"/>
    </location>
</feature>
<feature type="repeat" description="PPR 6">
    <location>
        <begin position="314"/>
        <end position="348"/>
    </location>
</feature>
<feature type="repeat" description="PPR 7">
    <location>
        <begin position="349"/>
        <end position="385"/>
    </location>
</feature>
<feature type="repeat" description="PPR 8">
    <location>
        <begin position="468"/>
        <end position="504"/>
    </location>
</feature>
<feature type="repeat" description="PPR 9">
    <location>
        <begin position="505"/>
        <end position="540"/>
    </location>
</feature>
<protein>
    <recommendedName>
        <fullName>Putative pentatricopeptide repeat-containing protein At1g28020</fullName>
    </recommendedName>
</protein>
<comment type="similarity">
    <text evidence="1">Belongs to the PPR family. P subfamily.</text>
</comment>
<comment type="sequence caution" evidence="1">
    <conflict type="erroneous gene model prediction">
        <sequence resource="EMBL-CDS" id="AAG51479"/>
    </conflict>
</comment>
<comment type="online information" name="Pentatricopeptide repeat proteins">
    <link uri="https://ppr.plantenergy.uwa.edu.au"/>
</comment>